<organism>
    <name type="scientific">Bacillus anthracis</name>
    <dbReference type="NCBI Taxonomy" id="1392"/>
    <lineage>
        <taxon>Bacteria</taxon>
        <taxon>Bacillati</taxon>
        <taxon>Bacillota</taxon>
        <taxon>Bacilli</taxon>
        <taxon>Bacillales</taxon>
        <taxon>Bacillaceae</taxon>
        <taxon>Bacillus</taxon>
        <taxon>Bacillus cereus group</taxon>
    </lineage>
</organism>
<protein>
    <recommendedName>
        <fullName evidence="2">Formamidopyrimidine-DNA glycosylase</fullName>
        <shortName evidence="2">Fapy-DNA glycosylase</shortName>
        <ecNumber evidence="2">3.2.2.23</ecNumber>
    </recommendedName>
    <alternativeName>
        <fullName evidence="2">DNA-(apurinic or apyrimidinic site) lyase MutM</fullName>
        <shortName evidence="2">AP lyase MutM</shortName>
        <ecNumber evidence="2">4.2.99.18</ecNumber>
    </alternativeName>
</protein>
<evidence type="ECO:0000250" key="1"/>
<evidence type="ECO:0000255" key="2">
    <source>
        <dbReference type="HAMAP-Rule" id="MF_00103"/>
    </source>
</evidence>
<keyword id="KW-0227">DNA damage</keyword>
<keyword id="KW-0234">DNA repair</keyword>
<keyword id="KW-0238">DNA-binding</keyword>
<keyword id="KW-0326">Glycosidase</keyword>
<keyword id="KW-0378">Hydrolase</keyword>
<keyword id="KW-0456">Lyase</keyword>
<keyword id="KW-0479">Metal-binding</keyword>
<keyword id="KW-0511">Multifunctional enzyme</keyword>
<keyword id="KW-1185">Reference proteome</keyword>
<keyword id="KW-0862">Zinc</keyword>
<keyword id="KW-0863">Zinc-finger</keyword>
<sequence>MPELPEVENVRRTLENLVTGKTIEDVIVTYPKIVKRPDDAEIFKEMLKGETIENIKRRGKFLLLYVTNYVIVSHLRMEGKFLLHQEDEPIDKHTHVRFLFTDGTELHYKDVRKFGTMHLFKKGEEMNQMPLADLGPEPFDAELTPQYLHERLQKTNRKIKVVLLDQRLLVGLGNIYVDEVLFRSQIHPEREASSLTAEEIERIYEATVTTLGEAVKRGGSTIRTYINSQGQIGSFQELLNVYGKKGEPCVTCGTILEKTVVGGRGTHYCPICQPRI</sequence>
<proteinExistence type="inferred from homology"/>
<name>FPG_BACAN</name>
<accession>Q81L04</accession>
<accession>Q6HSG0</accession>
<accession>Q6KLQ5</accession>
<comment type="function">
    <text evidence="2">Involved in base excision repair of DNA damaged by oxidation or by mutagenic agents. Acts as a DNA glycosylase that recognizes and removes damaged bases. Has a preference for oxidized purines, such as 7,8-dihydro-8-oxoguanine (8-oxoG). Has AP (apurinic/apyrimidinic) lyase activity and introduces nicks in the DNA strand. Cleaves the DNA backbone by beta-delta elimination to generate a single-strand break at the site of the removed base with both 3'- and 5'-phosphates.</text>
</comment>
<comment type="catalytic activity">
    <reaction evidence="2">
        <text>Hydrolysis of DNA containing ring-opened 7-methylguanine residues, releasing 2,6-diamino-4-hydroxy-5-(N-methyl)formamidopyrimidine.</text>
        <dbReference type="EC" id="3.2.2.23"/>
    </reaction>
</comment>
<comment type="catalytic activity">
    <reaction evidence="2">
        <text>2'-deoxyribonucleotide-(2'-deoxyribose 5'-phosphate)-2'-deoxyribonucleotide-DNA = a 3'-end 2'-deoxyribonucleotide-(2,3-dehydro-2,3-deoxyribose 5'-phosphate)-DNA + a 5'-end 5'-phospho-2'-deoxyribonucleoside-DNA + H(+)</text>
        <dbReference type="Rhea" id="RHEA:66592"/>
        <dbReference type="Rhea" id="RHEA-COMP:13180"/>
        <dbReference type="Rhea" id="RHEA-COMP:16897"/>
        <dbReference type="Rhea" id="RHEA-COMP:17067"/>
        <dbReference type="ChEBI" id="CHEBI:15378"/>
        <dbReference type="ChEBI" id="CHEBI:136412"/>
        <dbReference type="ChEBI" id="CHEBI:157695"/>
        <dbReference type="ChEBI" id="CHEBI:167181"/>
        <dbReference type="EC" id="4.2.99.18"/>
    </reaction>
</comment>
<comment type="cofactor">
    <cofactor evidence="2">
        <name>Zn(2+)</name>
        <dbReference type="ChEBI" id="CHEBI:29105"/>
    </cofactor>
    <text evidence="2">Binds 1 zinc ion per subunit.</text>
</comment>
<comment type="subunit">
    <text evidence="2">Monomer.</text>
</comment>
<comment type="similarity">
    <text evidence="2">Belongs to the FPG family.</text>
</comment>
<reference key="1">
    <citation type="journal article" date="2003" name="Nature">
        <title>The genome sequence of Bacillus anthracis Ames and comparison to closely related bacteria.</title>
        <authorList>
            <person name="Read T.D."/>
            <person name="Peterson S.N."/>
            <person name="Tourasse N.J."/>
            <person name="Baillie L.W."/>
            <person name="Paulsen I.T."/>
            <person name="Nelson K.E."/>
            <person name="Tettelin H."/>
            <person name="Fouts D.E."/>
            <person name="Eisen J.A."/>
            <person name="Gill S.R."/>
            <person name="Holtzapple E.K."/>
            <person name="Okstad O.A."/>
            <person name="Helgason E."/>
            <person name="Rilstone J."/>
            <person name="Wu M."/>
            <person name="Kolonay J.F."/>
            <person name="Beanan M.J."/>
            <person name="Dodson R.J."/>
            <person name="Brinkac L.M."/>
            <person name="Gwinn M.L."/>
            <person name="DeBoy R.T."/>
            <person name="Madpu R."/>
            <person name="Daugherty S.C."/>
            <person name="Durkin A.S."/>
            <person name="Haft D.H."/>
            <person name="Nelson W.C."/>
            <person name="Peterson J.D."/>
            <person name="Pop M."/>
            <person name="Khouri H.M."/>
            <person name="Radune D."/>
            <person name="Benton J.L."/>
            <person name="Mahamoud Y."/>
            <person name="Jiang L."/>
            <person name="Hance I.R."/>
            <person name="Weidman J.F."/>
            <person name="Berry K.J."/>
            <person name="Plaut R.D."/>
            <person name="Wolf A.M."/>
            <person name="Watkins K.L."/>
            <person name="Nierman W.C."/>
            <person name="Hazen A."/>
            <person name="Cline R.T."/>
            <person name="Redmond C."/>
            <person name="Thwaite J.E."/>
            <person name="White O."/>
            <person name="Salzberg S.L."/>
            <person name="Thomason B."/>
            <person name="Friedlander A.M."/>
            <person name="Koehler T.M."/>
            <person name="Hanna P.C."/>
            <person name="Kolstoe A.-B."/>
            <person name="Fraser C.M."/>
        </authorList>
    </citation>
    <scope>NUCLEOTIDE SEQUENCE [LARGE SCALE GENOMIC DNA]</scope>
    <source>
        <strain>Ames / isolate Porton</strain>
    </source>
</reference>
<reference key="2">
    <citation type="journal article" date="2009" name="J. Bacteriol.">
        <title>The complete genome sequence of Bacillus anthracis Ames 'Ancestor'.</title>
        <authorList>
            <person name="Ravel J."/>
            <person name="Jiang L."/>
            <person name="Stanley S.T."/>
            <person name="Wilson M.R."/>
            <person name="Decker R.S."/>
            <person name="Read T.D."/>
            <person name="Worsham P."/>
            <person name="Keim P.S."/>
            <person name="Salzberg S.L."/>
            <person name="Fraser-Liggett C.M."/>
            <person name="Rasko D.A."/>
        </authorList>
    </citation>
    <scope>NUCLEOTIDE SEQUENCE [LARGE SCALE GENOMIC DNA]</scope>
    <source>
        <strain>Ames ancestor</strain>
    </source>
</reference>
<reference key="3">
    <citation type="submission" date="2004-01" db="EMBL/GenBank/DDBJ databases">
        <title>Complete genome sequence of Bacillus anthracis Sterne.</title>
        <authorList>
            <person name="Brettin T.S."/>
            <person name="Bruce D."/>
            <person name="Challacombe J.F."/>
            <person name="Gilna P."/>
            <person name="Han C."/>
            <person name="Hill K."/>
            <person name="Hitchcock P."/>
            <person name="Jackson P."/>
            <person name="Keim P."/>
            <person name="Longmire J."/>
            <person name="Lucas S."/>
            <person name="Okinaka R."/>
            <person name="Richardson P."/>
            <person name="Rubin E."/>
            <person name="Tice H."/>
        </authorList>
    </citation>
    <scope>NUCLEOTIDE SEQUENCE [LARGE SCALE GENOMIC DNA]</scope>
    <source>
        <strain>Sterne</strain>
    </source>
</reference>
<gene>
    <name evidence="2" type="primary">mutM</name>
    <name evidence="2" type="synonym">fpg</name>
    <name type="ordered locus">BA_4830</name>
    <name type="ordered locus">GBAA_4830</name>
    <name type="ordered locus">BAS4481</name>
</gene>
<dbReference type="EC" id="3.2.2.23" evidence="2"/>
<dbReference type="EC" id="4.2.99.18" evidence="2"/>
<dbReference type="EMBL" id="AE016879">
    <property type="protein sequence ID" value="AAP28519.1"/>
    <property type="molecule type" value="Genomic_DNA"/>
</dbReference>
<dbReference type="EMBL" id="AE017334">
    <property type="protein sequence ID" value="AAT33950.1"/>
    <property type="molecule type" value="Genomic_DNA"/>
</dbReference>
<dbReference type="EMBL" id="AE017225">
    <property type="protein sequence ID" value="AAT56779.1"/>
    <property type="molecule type" value="Genomic_DNA"/>
</dbReference>
<dbReference type="RefSeq" id="NP_847033.1">
    <property type="nucleotide sequence ID" value="NC_003997.3"/>
</dbReference>
<dbReference type="RefSeq" id="WP_001114480.1">
    <property type="nucleotide sequence ID" value="NZ_WXXJ01000026.1"/>
</dbReference>
<dbReference type="RefSeq" id="YP_030728.1">
    <property type="nucleotide sequence ID" value="NC_005945.1"/>
</dbReference>
<dbReference type="SMR" id="Q81L04"/>
<dbReference type="STRING" id="261594.GBAA_4830"/>
<dbReference type="DNASU" id="1083979"/>
<dbReference type="GeneID" id="45024458"/>
<dbReference type="KEGG" id="ban:BA_4830"/>
<dbReference type="KEGG" id="banh:HYU01_23535"/>
<dbReference type="KEGG" id="bar:GBAA_4830"/>
<dbReference type="KEGG" id="bat:BAS4481"/>
<dbReference type="PATRIC" id="fig|198094.11.peg.4791"/>
<dbReference type="eggNOG" id="COG0266">
    <property type="taxonomic scope" value="Bacteria"/>
</dbReference>
<dbReference type="HOGENOM" id="CLU_038423_1_3_9"/>
<dbReference type="OMA" id="WMNRSSY"/>
<dbReference type="OrthoDB" id="9800855at2"/>
<dbReference type="Proteomes" id="UP000000427">
    <property type="component" value="Chromosome"/>
</dbReference>
<dbReference type="Proteomes" id="UP000000594">
    <property type="component" value="Chromosome"/>
</dbReference>
<dbReference type="GO" id="GO:0034039">
    <property type="term" value="F:8-oxo-7,8-dihydroguanine DNA N-glycosylase activity"/>
    <property type="evidence" value="ECO:0007669"/>
    <property type="project" value="TreeGrafter"/>
</dbReference>
<dbReference type="GO" id="GO:0140078">
    <property type="term" value="F:class I DNA-(apurinic or apyrimidinic site) endonuclease activity"/>
    <property type="evidence" value="ECO:0007669"/>
    <property type="project" value="UniProtKB-EC"/>
</dbReference>
<dbReference type="GO" id="GO:0003684">
    <property type="term" value="F:damaged DNA binding"/>
    <property type="evidence" value="ECO:0007669"/>
    <property type="project" value="InterPro"/>
</dbReference>
<dbReference type="GO" id="GO:0008270">
    <property type="term" value="F:zinc ion binding"/>
    <property type="evidence" value="ECO:0007669"/>
    <property type="project" value="UniProtKB-UniRule"/>
</dbReference>
<dbReference type="GO" id="GO:0006284">
    <property type="term" value="P:base-excision repair"/>
    <property type="evidence" value="ECO:0007669"/>
    <property type="project" value="InterPro"/>
</dbReference>
<dbReference type="CDD" id="cd08966">
    <property type="entry name" value="EcFpg-like_N"/>
    <property type="match status" value="1"/>
</dbReference>
<dbReference type="FunFam" id="1.10.8.50:FF:000003">
    <property type="entry name" value="Formamidopyrimidine-DNA glycosylase"/>
    <property type="match status" value="1"/>
</dbReference>
<dbReference type="FunFam" id="3.20.190.10:FF:000001">
    <property type="entry name" value="Formamidopyrimidine-DNA glycosylase"/>
    <property type="match status" value="1"/>
</dbReference>
<dbReference type="Gene3D" id="1.10.8.50">
    <property type="match status" value="1"/>
</dbReference>
<dbReference type="Gene3D" id="3.20.190.10">
    <property type="entry name" value="MutM-like, N-terminal"/>
    <property type="match status" value="1"/>
</dbReference>
<dbReference type="HAMAP" id="MF_00103">
    <property type="entry name" value="Fapy_DNA_glycosyl"/>
    <property type="match status" value="1"/>
</dbReference>
<dbReference type="InterPro" id="IPR015886">
    <property type="entry name" value="DNA_glyclase/AP_lyase_DNA-bd"/>
</dbReference>
<dbReference type="InterPro" id="IPR015887">
    <property type="entry name" value="DNA_glyclase_Znf_dom_DNA_BS"/>
</dbReference>
<dbReference type="InterPro" id="IPR020629">
    <property type="entry name" value="Formamido-pyr_DNA_Glyclase"/>
</dbReference>
<dbReference type="InterPro" id="IPR012319">
    <property type="entry name" value="FPG_cat"/>
</dbReference>
<dbReference type="InterPro" id="IPR035937">
    <property type="entry name" value="MutM-like_N-ter"/>
</dbReference>
<dbReference type="InterPro" id="IPR010979">
    <property type="entry name" value="Ribosomal_uS13-like_H2TH"/>
</dbReference>
<dbReference type="InterPro" id="IPR000214">
    <property type="entry name" value="Znf_DNA_glyclase/AP_lyase"/>
</dbReference>
<dbReference type="InterPro" id="IPR010663">
    <property type="entry name" value="Znf_FPG/IleRS"/>
</dbReference>
<dbReference type="NCBIfam" id="TIGR00577">
    <property type="entry name" value="fpg"/>
    <property type="match status" value="1"/>
</dbReference>
<dbReference type="NCBIfam" id="NF002211">
    <property type="entry name" value="PRK01103.1"/>
    <property type="match status" value="1"/>
</dbReference>
<dbReference type="PANTHER" id="PTHR22993">
    <property type="entry name" value="FORMAMIDOPYRIMIDINE-DNA GLYCOSYLASE"/>
    <property type="match status" value="1"/>
</dbReference>
<dbReference type="PANTHER" id="PTHR22993:SF9">
    <property type="entry name" value="FORMAMIDOPYRIMIDINE-DNA GLYCOSYLASE"/>
    <property type="match status" value="1"/>
</dbReference>
<dbReference type="Pfam" id="PF01149">
    <property type="entry name" value="Fapy_DNA_glyco"/>
    <property type="match status" value="1"/>
</dbReference>
<dbReference type="Pfam" id="PF06831">
    <property type="entry name" value="H2TH"/>
    <property type="match status" value="1"/>
</dbReference>
<dbReference type="Pfam" id="PF06827">
    <property type="entry name" value="zf-FPG_IleRS"/>
    <property type="match status" value="1"/>
</dbReference>
<dbReference type="SMART" id="SM00898">
    <property type="entry name" value="Fapy_DNA_glyco"/>
    <property type="match status" value="1"/>
</dbReference>
<dbReference type="SMART" id="SM01232">
    <property type="entry name" value="H2TH"/>
    <property type="match status" value="1"/>
</dbReference>
<dbReference type="SUPFAM" id="SSF57716">
    <property type="entry name" value="Glucocorticoid receptor-like (DNA-binding domain)"/>
    <property type="match status" value="1"/>
</dbReference>
<dbReference type="SUPFAM" id="SSF81624">
    <property type="entry name" value="N-terminal domain of MutM-like DNA repair proteins"/>
    <property type="match status" value="1"/>
</dbReference>
<dbReference type="SUPFAM" id="SSF46946">
    <property type="entry name" value="S13-like H2TH domain"/>
    <property type="match status" value="1"/>
</dbReference>
<dbReference type="PROSITE" id="PS51068">
    <property type="entry name" value="FPG_CAT"/>
    <property type="match status" value="1"/>
</dbReference>
<dbReference type="PROSITE" id="PS01242">
    <property type="entry name" value="ZF_FPG_1"/>
    <property type="match status" value="1"/>
</dbReference>
<dbReference type="PROSITE" id="PS51066">
    <property type="entry name" value="ZF_FPG_2"/>
    <property type="match status" value="1"/>
</dbReference>
<feature type="initiator methionine" description="Removed" evidence="1">
    <location>
        <position position="1"/>
    </location>
</feature>
<feature type="chain" id="PRO_0000170807" description="Formamidopyrimidine-DNA glycosylase">
    <location>
        <begin position="2"/>
        <end position="276"/>
    </location>
</feature>
<feature type="zinc finger region" description="FPG-type" evidence="2">
    <location>
        <begin position="240"/>
        <end position="274"/>
    </location>
</feature>
<feature type="active site" description="Schiff-base intermediate with DNA" evidence="2">
    <location>
        <position position="2"/>
    </location>
</feature>
<feature type="active site" description="Proton donor" evidence="2">
    <location>
        <position position="3"/>
    </location>
</feature>
<feature type="active site" description="Proton donor; for beta-elimination activity" evidence="2">
    <location>
        <position position="60"/>
    </location>
</feature>
<feature type="active site" description="Proton donor; for delta-elimination activity" evidence="2">
    <location>
        <position position="264"/>
    </location>
</feature>
<feature type="binding site" evidence="2">
    <location>
        <position position="93"/>
    </location>
    <ligand>
        <name>DNA</name>
        <dbReference type="ChEBI" id="CHEBI:16991"/>
    </ligand>
</feature>
<feature type="binding site" evidence="2">
    <location>
        <position position="112"/>
    </location>
    <ligand>
        <name>DNA</name>
        <dbReference type="ChEBI" id="CHEBI:16991"/>
    </ligand>
</feature>